<accession>P48070</accession>
<feature type="chain" id="PRO_0000062466" description="Ribulose bisphosphate carboxylase large chain">
    <location>
        <begin position="1" status="less than"/>
        <end position="436" status="greater than"/>
    </location>
</feature>
<feature type="active site" description="Proton acceptor" evidence="1">
    <location>
        <position position="156"/>
    </location>
</feature>
<feature type="active site" description="Proton acceptor" evidence="1">
    <location>
        <position position="275"/>
    </location>
</feature>
<feature type="binding site" description="in homodimeric partner" evidence="1">
    <location>
        <position position="104"/>
    </location>
    <ligand>
        <name>substrate</name>
    </ligand>
</feature>
<feature type="binding site" evidence="1">
    <location>
        <position position="154"/>
    </location>
    <ligand>
        <name>substrate</name>
    </ligand>
</feature>
<feature type="binding site" evidence="1">
    <location>
        <position position="158"/>
    </location>
    <ligand>
        <name>substrate</name>
    </ligand>
</feature>
<feature type="binding site" description="via carbamate group" evidence="1">
    <location>
        <position position="182"/>
    </location>
    <ligand>
        <name>Mg(2+)</name>
        <dbReference type="ChEBI" id="CHEBI:18420"/>
    </ligand>
</feature>
<feature type="binding site" evidence="1">
    <location>
        <position position="184"/>
    </location>
    <ligand>
        <name>Mg(2+)</name>
        <dbReference type="ChEBI" id="CHEBI:18420"/>
    </ligand>
</feature>
<feature type="binding site" evidence="1">
    <location>
        <position position="185"/>
    </location>
    <ligand>
        <name>Mg(2+)</name>
        <dbReference type="ChEBI" id="CHEBI:18420"/>
    </ligand>
</feature>
<feature type="binding site" evidence="1">
    <location>
        <position position="276"/>
    </location>
    <ligand>
        <name>substrate</name>
    </ligand>
</feature>
<feature type="binding site" evidence="1">
    <location>
        <position position="308"/>
    </location>
    <ligand>
        <name>substrate</name>
    </ligand>
</feature>
<feature type="binding site" evidence="1">
    <location>
        <position position="360"/>
    </location>
    <ligand>
        <name>substrate</name>
    </ligand>
</feature>
<feature type="site" description="Transition state stabilizer" evidence="1">
    <location>
        <position position="315"/>
    </location>
</feature>
<feature type="modified residue" description="N6-carboxylysine" evidence="1">
    <location>
        <position position="182"/>
    </location>
</feature>
<feature type="disulfide bond" description="Interchain; in linked form" evidence="1">
    <location>
        <position position="228"/>
    </location>
</feature>
<feature type="non-terminal residue">
    <location>
        <position position="1"/>
    </location>
</feature>
<feature type="non-terminal residue">
    <location>
        <position position="436"/>
    </location>
</feature>
<gene>
    <name evidence="1" type="primary">rbcL</name>
</gene>
<evidence type="ECO:0000255" key="1">
    <source>
        <dbReference type="HAMAP-Rule" id="MF_01338"/>
    </source>
</evidence>
<protein>
    <recommendedName>
        <fullName evidence="1">Ribulose bisphosphate carboxylase large chain</fullName>
        <shortName evidence="1">RuBisCO large subunit</shortName>
        <ecNumber evidence="1">4.1.1.39</ecNumber>
    </recommendedName>
</protein>
<proteinExistence type="evidence at transcript level"/>
<reference key="1">
    <citation type="journal article" date="1995" name="Nucleic Acids Res.">
        <title>Evidence for the late origin of introns in chloroplast genes from an evolutionary analysis of the genus Euglena.</title>
        <authorList>
            <person name="Thompson M.D."/>
            <person name="Copertino D.W."/>
            <person name="Thompson E."/>
            <person name="Favreau M.R."/>
            <person name="Hallick R.B."/>
        </authorList>
    </citation>
    <scope>NUCLEOTIDE SEQUENCE [MRNA]</scope>
    <source>
        <strain>UTEX 366 / Var. terricola</strain>
    </source>
</reference>
<dbReference type="EC" id="4.1.1.39" evidence="1"/>
<dbReference type="EMBL" id="U21005">
    <property type="protein sequence ID" value="AAA91978.1"/>
    <property type="molecule type" value="mRNA"/>
</dbReference>
<dbReference type="PIR" id="S66167">
    <property type="entry name" value="S66167"/>
</dbReference>
<dbReference type="SMR" id="P48070"/>
<dbReference type="GO" id="GO:0009507">
    <property type="term" value="C:chloroplast"/>
    <property type="evidence" value="ECO:0007669"/>
    <property type="project" value="UniProtKB-SubCell"/>
</dbReference>
<dbReference type="GO" id="GO:0000287">
    <property type="term" value="F:magnesium ion binding"/>
    <property type="evidence" value="ECO:0007669"/>
    <property type="project" value="InterPro"/>
</dbReference>
<dbReference type="GO" id="GO:0004497">
    <property type="term" value="F:monooxygenase activity"/>
    <property type="evidence" value="ECO:0007669"/>
    <property type="project" value="UniProtKB-KW"/>
</dbReference>
<dbReference type="GO" id="GO:0016984">
    <property type="term" value="F:ribulose-bisphosphate carboxylase activity"/>
    <property type="evidence" value="ECO:0007669"/>
    <property type="project" value="UniProtKB-EC"/>
</dbReference>
<dbReference type="GO" id="GO:0009853">
    <property type="term" value="P:photorespiration"/>
    <property type="evidence" value="ECO:0007669"/>
    <property type="project" value="UniProtKB-KW"/>
</dbReference>
<dbReference type="GO" id="GO:0019253">
    <property type="term" value="P:reductive pentose-phosphate cycle"/>
    <property type="evidence" value="ECO:0007669"/>
    <property type="project" value="UniProtKB-KW"/>
</dbReference>
<dbReference type="CDD" id="cd08212">
    <property type="entry name" value="RuBisCO_large_I"/>
    <property type="match status" value="1"/>
</dbReference>
<dbReference type="Gene3D" id="3.20.20.110">
    <property type="entry name" value="Ribulose bisphosphate carboxylase, large subunit, C-terminal domain"/>
    <property type="match status" value="1"/>
</dbReference>
<dbReference type="Gene3D" id="3.30.70.150">
    <property type="entry name" value="RuBisCO large subunit, N-terminal domain"/>
    <property type="match status" value="1"/>
</dbReference>
<dbReference type="HAMAP" id="MF_01338">
    <property type="entry name" value="RuBisCO_L_type1"/>
    <property type="match status" value="1"/>
</dbReference>
<dbReference type="InterPro" id="IPR033966">
    <property type="entry name" value="RuBisCO"/>
</dbReference>
<dbReference type="InterPro" id="IPR020878">
    <property type="entry name" value="RuBisCo_large_chain_AS"/>
</dbReference>
<dbReference type="InterPro" id="IPR000685">
    <property type="entry name" value="RuBisCO_lsu_C"/>
</dbReference>
<dbReference type="InterPro" id="IPR036376">
    <property type="entry name" value="RuBisCO_lsu_C_sf"/>
</dbReference>
<dbReference type="InterPro" id="IPR017443">
    <property type="entry name" value="RuBisCO_lsu_fd_N"/>
</dbReference>
<dbReference type="InterPro" id="IPR036422">
    <property type="entry name" value="RuBisCO_lsu_N_sf"/>
</dbReference>
<dbReference type="InterPro" id="IPR020888">
    <property type="entry name" value="RuBisCO_lsuI"/>
</dbReference>
<dbReference type="NCBIfam" id="NF003252">
    <property type="entry name" value="PRK04208.1"/>
    <property type="match status" value="1"/>
</dbReference>
<dbReference type="PANTHER" id="PTHR42704">
    <property type="entry name" value="RIBULOSE BISPHOSPHATE CARBOXYLASE"/>
    <property type="match status" value="1"/>
</dbReference>
<dbReference type="PANTHER" id="PTHR42704:SF17">
    <property type="entry name" value="RIBULOSE BISPHOSPHATE CARBOXYLASE LARGE CHAIN"/>
    <property type="match status" value="1"/>
</dbReference>
<dbReference type="Pfam" id="PF00016">
    <property type="entry name" value="RuBisCO_large"/>
    <property type="match status" value="1"/>
</dbReference>
<dbReference type="Pfam" id="PF02788">
    <property type="entry name" value="RuBisCO_large_N"/>
    <property type="match status" value="1"/>
</dbReference>
<dbReference type="SFLD" id="SFLDG01052">
    <property type="entry name" value="RuBisCO"/>
    <property type="match status" value="1"/>
</dbReference>
<dbReference type="SFLD" id="SFLDS00014">
    <property type="entry name" value="RuBisCO"/>
    <property type="match status" value="1"/>
</dbReference>
<dbReference type="SFLD" id="SFLDG00301">
    <property type="entry name" value="RuBisCO-like_proteins"/>
    <property type="match status" value="1"/>
</dbReference>
<dbReference type="SUPFAM" id="SSF51649">
    <property type="entry name" value="RuBisCo, C-terminal domain"/>
    <property type="match status" value="1"/>
</dbReference>
<dbReference type="SUPFAM" id="SSF54966">
    <property type="entry name" value="RuBisCO, large subunit, small (N-terminal) domain"/>
    <property type="match status" value="1"/>
</dbReference>
<dbReference type="PROSITE" id="PS00157">
    <property type="entry name" value="RUBISCO_LARGE"/>
    <property type="match status" value="1"/>
</dbReference>
<organism>
    <name type="scientific">Euglena geniculata</name>
    <dbReference type="NCBI Taxonomy" id="38274"/>
    <lineage>
        <taxon>Eukaryota</taxon>
        <taxon>Discoba</taxon>
        <taxon>Euglenozoa</taxon>
        <taxon>Euglenida</taxon>
        <taxon>Spirocuta</taxon>
        <taxon>Euglenophyceae</taxon>
        <taxon>Euglenales</taxon>
        <taxon>Euglenaceae</taxon>
        <taxon>Euglena</taxon>
    </lineage>
</organism>
<geneLocation type="chloroplast"/>
<sequence>YRLTYYTPDNQVSETDILAAFRMTPQPGVPAEECGAAVAAESSTGTWTTVWTDGLTQLDRDKGRCYDLEPVPGESNQYIAYVAYPIDLFEEGSVTNLLTSIVGNVFGFKALRALRLEDLRIPPAYSKTFWGPPHGIQVERDRLNKYGRPLLGCTIKPKLGLSAKNYGRAVYECLRGGLDFTKDDENVNSQSFMRWRDRFLFCAEAIYKAQTETGEVKGHYLNATAGTCEEMYKRASFAAQIGVPIIMHDYLTGGFTANTSLAMYCRDNGLLLHIHRAMHAVIDRQRNHGIHFRVLAKTLRMSGGDHLHSGTVVGKLEGEREVTLGFVDLMRDAYVEKDRSRGIYFTQDWCGMGGTMPVASGGIHVWHMPALTEIFGDDACLQFGGGTLGHPWGNAPGAAANRVASEACVQARNEGRDLSREGGDVIREACKWSPEL</sequence>
<keyword id="KW-0113">Calvin cycle</keyword>
<keyword id="KW-0120">Carbon dioxide fixation</keyword>
<keyword id="KW-0150">Chloroplast</keyword>
<keyword id="KW-1015">Disulfide bond</keyword>
<keyword id="KW-0456">Lyase</keyword>
<keyword id="KW-0460">Magnesium</keyword>
<keyword id="KW-0479">Metal-binding</keyword>
<keyword id="KW-0503">Monooxygenase</keyword>
<keyword id="KW-0560">Oxidoreductase</keyword>
<keyword id="KW-0601">Photorespiration</keyword>
<keyword id="KW-0602">Photosynthesis</keyword>
<keyword id="KW-0934">Plastid</keyword>
<comment type="function">
    <text evidence="1">RuBisCO catalyzes two reactions: the carboxylation of D-ribulose 1,5-bisphosphate, the primary event in carbon dioxide fixation, as well as the oxidative fragmentation of the pentose substrate in the photorespiration process. Both reactions occur simultaneously and in competition at the same active site.</text>
</comment>
<comment type="catalytic activity">
    <reaction evidence="1">
        <text>2 (2R)-3-phosphoglycerate + 2 H(+) = D-ribulose 1,5-bisphosphate + CO2 + H2O</text>
        <dbReference type="Rhea" id="RHEA:23124"/>
        <dbReference type="ChEBI" id="CHEBI:15377"/>
        <dbReference type="ChEBI" id="CHEBI:15378"/>
        <dbReference type="ChEBI" id="CHEBI:16526"/>
        <dbReference type="ChEBI" id="CHEBI:57870"/>
        <dbReference type="ChEBI" id="CHEBI:58272"/>
        <dbReference type="EC" id="4.1.1.39"/>
    </reaction>
</comment>
<comment type="catalytic activity">
    <reaction evidence="1">
        <text>D-ribulose 1,5-bisphosphate + O2 = 2-phosphoglycolate + (2R)-3-phosphoglycerate + 2 H(+)</text>
        <dbReference type="Rhea" id="RHEA:36631"/>
        <dbReference type="ChEBI" id="CHEBI:15378"/>
        <dbReference type="ChEBI" id="CHEBI:15379"/>
        <dbReference type="ChEBI" id="CHEBI:57870"/>
        <dbReference type="ChEBI" id="CHEBI:58033"/>
        <dbReference type="ChEBI" id="CHEBI:58272"/>
    </reaction>
</comment>
<comment type="cofactor">
    <cofactor evidence="1">
        <name>Mg(2+)</name>
        <dbReference type="ChEBI" id="CHEBI:18420"/>
    </cofactor>
    <text evidence="1">Binds 1 Mg(2+) ion per subunit.</text>
</comment>
<comment type="subunit">
    <text evidence="1">Heterohexadecamer of 8 large chains and 8 small chains; disulfide-linked. The disulfide link is formed within the large subunit homodimers.</text>
</comment>
<comment type="subcellular location">
    <subcellularLocation>
        <location>Plastid</location>
        <location>Chloroplast</location>
    </subcellularLocation>
</comment>
<comment type="PTM">
    <text evidence="1">The disulfide bond which can form in the large chain dimeric partners within the hexadecamer appears to be associated with oxidative stress and protein turnover.</text>
</comment>
<comment type="miscellaneous">
    <text evidence="1">The basic functional RuBisCO is composed of a large chain homodimer in a 'head-to-tail' conformation. In form I RuBisCO this homodimer is arranged in a barrel-like tetramer with the small subunits forming a tetrameric 'cap' on each end of the 'barrel'.</text>
</comment>
<comment type="similarity">
    <text evidence="1">Belongs to the RuBisCO large chain family. Type I subfamily.</text>
</comment>
<name>RBL_EUGGE</name>